<proteinExistence type="uncertain"/>
<comment type="similarity">
    <text evidence="2">Belongs to the glycosyl hydrolase 2 family.</text>
</comment>
<comment type="caution">
    <text evidence="2">Could be the product of a pseudogene. Highly similar to the N-terminus of GUSB but lacks the C-terminal part.</text>
</comment>
<gene>
    <name type="primary">GUSBP11</name>
</gene>
<protein>
    <recommendedName>
        <fullName>Putative inactive beta-glucuronidase protein GUSBP11</fullName>
    </recommendedName>
    <alternativeName>
        <fullName>Beta-glucuronidase pseudogene 11</fullName>
    </alternativeName>
</protein>
<keyword id="KW-1185">Reference proteome</keyword>
<dbReference type="EMBL" id="AP000347">
    <property type="status" value="NOT_ANNOTATED_CDS"/>
    <property type="molecule type" value="Genomic_DNA"/>
</dbReference>
<dbReference type="SMR" id="Q6P575"/>
<dbReference type="GlyGen" id="Q6P575">
    <property type="glycosylation" value="1 site, 1 O-linked glycan (1 site)"/>
</dbReference>
<dbReference type="BioMuta" id="HGNC:42325"/>
<dbReference type="DMDM" id="187671924"/>
<dbReference type="MassIVE" id="Q6P575"/>
<dbReference type="PeptideAtlas" id="Q6P575"/>
<dbReference type="AGR" id="HGNC:42325"/>
<dbReference type="GeneCards" id="GUSBP11"/>
<dbReference type="HGNC" id="HGNC:42325">
    <property type="gene designation" value="GUSBP11"/>
</dbReference>
<dbReference type="neXtProt" id="NX_Q6P575"/>
<dbReference type="InParanoid" id="Q6P575"/>
<dbReference type="PAN-GO" id="Q6P575">
    <property type="GO annotations" value="0 GO annotations based on evolutionary models"/>
</dbReference>
<dbReference type="PhylomeDB" id="Q6P575"/>
<dbReference type="ChiTaRS" id="GUSBP11">
    <property type="organism name" value="human"/>
</dbReference>
<dbReference type="Pharos" id="Q6P575">
    <property type="development level" value="Tdark"/>
</dbReference>
<dbReference type="Proteomes" id="UP000005640">
    <property type="component" value="Unplaced"/>
</dbReference>
<dbReference type="RNAct" id="Q6P575">
    <property type="molecule type" value="protein"/>
</dbReference>
<dbReference type="GO" id="GO:0004553">
    <property type="term" value="F:hydrolase activity, hydrolyzing O-glycosyl compounds"/>
    <property type="evidence" value="ECO:0007669"/>
    <property type="project" value="InterPro"/>
</dbReference>
<dbReference type="GO" id="GO:0005975">
    <property type="term" value="P:carbohydrate metabolic process"/>
    <property type="evidence" value="ECO:0007669"/>
    <property type="project" value="InterPro"/>
</dbReference>
<dbReference type="FunFam" id="2.60.120.260:FF:000027">
    <property type="entry name" value="Beta-glucuronidase"/>
    <property type="match status" value="1"/>
</dbReference>
<dbReference type="Gene3D" id="2.60.120.260">
    <property type="entry name" value="Galactose-binding domain-like"/>
    <property type="match status" value="1"/>
</dbReference>
<dbReference type="InterPro" id="IPR008979">
    <property type="entry name" value="Galactose-bd-like_sf"/>
</dbReference>
<dbReference type="InterPro" id="IPR006104">
    <property type="entry name" value="Glyco_hydro_2_N"/>
</dbReference>
<dbReference type="PANTHER" id="PTHR10066">
    <property type="entry name" value="BETA-GLUCURONIDASE"/>
    <property type="match status" value="1"/>
</dbReference>
<dbReference type="PANTHER" id="PTHR10066:SF67">
    <property type="entry name" value="BETA-GLUCURONIDASE"/>
    <property type="match status" value="1"/>
</dbReference>
<dbReference type="Pfam" id="PF02837">
    <property type="entry name" value="Glyco_hydro_2_N"/>
    <property type="match status" value="1"/>
</dbReference>
<dbReference type="SUPFAM" id="SSF49785">
    <property type="entry name" value="Galactose-binding domain-like"/>
    <property type="match status" value="1"/>
</dbReference>
<organism>
    <name type="scientific">Homo sapiens</name>
    <name type="common">Human</name>
    <dbReference type="NCBI Taxonomy" id="9606"/>
    <lineage>
        <taxon>Eukaryota</taxon>
        <taxon>Metazoa</taxon>
        <taxon>Chordata</taxon>
        <taxon>Craniata</taxon>
        <taxon>Vertebrata</taxon>
        <taxon>Euteleostomi</taxon>
        <taxon>Mammalia</taxon>
        <taxon>Eutheria</taxon>
        <taxon>Euarchontoglires</taxon>
        <taxon>Primates</taxon>
        <taxon>Haplorrhini</taxon>
        <taxon>Catarrhini</taxon>
        <taxon>Hominidae</taxon>
        <taxon>Homo</taxon>
    </lineage>
</organism>
<accession>Q6P575</accession>
<feature type="chain" id="PRO_0000331752" description="Putative inactive beta-glucuronidase protein GUSBP11">
    <location>
        <begin position="1"/>
        <end position="273"/>
    </location>
</feature>
<feature type="region of interest" description="Disordered" evidence="1">
    <location>
        <begin position="1"/>
        <end position="20"/>
    </location>
</feature>
<name>BGP11_HUMAN</name>
<reference key="1">
    <citation type="journal article" date="1999" name="Nature">
        <title>The DNA sequence of human chromosome 22.</title>
        <authorList>
            <person name="Dunham I."/>
            <person name="Hunt A.R."/>
            <person name="Collins J.E."/>
            <person name="Bruskiewich R."/>
            <person name="Beare D.M."/>
            <person name="Clamp M."/>
            <person name="Smink L.J."/>
            <person name="Ainscough R."/>
            <person name="Almeida J.P."/>
            <person name="Babbage A.K."/>
            <person name="Bagguley C."/>
            <person name="Bailey J."/>
            <person name="Barlow K.F."/>
            <person name="Bates K.N."/>
            <person name="Beasley O.P."/>
            <person name="Bird C.P."/>
            <person name="Blakey S.E."/>
            <person name="Bridgeman A.M."/>
            <person name="Buck D."/>
            <person name="Burgess J."/>
            <person name="Burrill W.D."/>
            <person name="Burton J."/>
            <person name="Carder C."/>
            <person name="Carter N.P."/>
            <person name="Chen Y."/>
            <person name="Clark G."/>
            <person name="Clegg S.M."/>
            <person name="Cobley V.E."/>
            <person name="Cole C.G."/>
            <person name="Collier R.E."/>
            <person name="Connor R."/>
            <person name="Conroy D."/>
            <person name="Corby N.R."/>
            <person name="Coville G.J."/>
            <person name="Cox A.V."/>
            <person name="Davis J."/>
            <person name="Dawson E."/>
            <person name="Dhami P.D."/>
            <person name="Dockree C."/>
            <person name="Dodsworth S.J."/>
            <person name="Durbin R.M."/>
            <person name="Ellington A.G."/>
            <person name="Evans K.L."/>
            <person name="Fey J.M."/>
            <person name="Fleming K."/>
            <person name="French L."/>
            <person name="Garner A.A."/>
            <person name="Gilbert J.G.R."/>
            <person name="Goward M.E."/>
            <person name="Grafham D.V."/>
            <person name="Griffiths M.N.D."/>
            <person name="Hall C."/>
            <person name="Hall R.E."/>
            <person name="Hall-Tamlyn G."/>
            <person name="Heathcott R.W."/>
            <person name="Ho S."/>
            <person name="Holmes S."/>
            <person name="Hunt S.E."/>
            <person name="Jones M.C."/>
            <person name="Kershaw J."/>
            <person name="Kimberley A.M."/>
            <person name="King A."/>
            <person name="Laird G.K."/>
            <person name="Langford C.F."/>
            <person name="Leversha M.A."/>
            <person name="Lloyd C."/>
            <person name="Lloyd D.M."/>
            <person name="Martyn I.D."/>
            <person name="Mashreghi-Mohammadi M."/>
            <person name="Matthews L.H."/>
            <person name="Mccann O.T."/>
            <person name="Mcclay J."/>
            <person name="Mclaren S."/>
            <person name="McMurray A.A."/>
            <person name="Milne S.A."/>
            <person name="Mortimore B.J."/>
            <person name="Odell C.N."/>
            <person name="Pavitt R."/>
            <person name="Pearce A.V."/>
            <person name="Pearson D."/>
            <person name="Phillimore B.J.C.T."/>
            <person name="Phillips S.H."/>
            <person name="Plumb R.W."/>
            <person name="Ramsay H."/>
            <person name="Ramsey Y."/>
            <person name="Rogers L."/>
            <person name="Ross M.T."/>
            <person name="Scott C.E."/>
            <person name="Sehra H.K."/>
            <person name="Skuce C.D."/>
            <person name="Smalley S."/>
            <person name="Smith M.L."/>
            <person name="Soderlund C."/>
            <person name="Spragon L."/>
            <person name="Steward C.A."/>
            <person name="Sulston J.E."/>
            <person name="Swann R.M."/>
            <person name="Vaudin M."/>
            <person name="Wall M."/>
            <person name="Wallis J.M."/>
            <person name="Whiteley M.N."/>
            <person name="Willey D.L."/>
            <person name="Williams L."/>
            <person name="Williams S.A."/>
            <person name="Williamson H."/>
            <person name="Wilmer T.E."/>
            <person name="Wilming L."/>
            <person name="Wright C.L."/>
            <person name="Hubbard T."/>
            <person name="Bentley D.R."/>
            <person name="Beck S."/>
            <person name="Rogers J."/>
            <person name="Shimizu N."/>
            <person name="Minoshima S."/>
            <person name="Kawasaki K."/>
            <person name="Sasaki T."/>
            <person name="Asakawa S."/>
            <person name="Kudoh J."/>
            <person name="Shintani A."/>
            <person name="Shibuya K."/>
            <person name="Yoshizaki Y."/>
            <person name="Aoki N."/>
            <person name="Mitsuyama S."/>
            <person name="Roe B.A."/>
            <person name="Chen F."/>
            <person name="Chu L."/>
            <person name="Crabtree J."/>
            <person name="Deschamps S."/>
            <person name="Do A."/>
            <person name="Do T."/>
            <person name="Dorman A."/>
            <person name="Fang F."/>
            <person name="Fu Y."/>
            <person name="Hu P."/>
            <person name="Hua A."/>
            <person name="Kenton S."/>
            <person name="Lai H."/>
            <person name="Lao H.I."/>
            <person name="Lewis J."/>
            <person name="Lewis S."/>
            <person name="Lin S.-P."/>
            <person name="Loh P."/>
            <person name="Malaj E."/>
            <person name="Nguyen T."/>
            <person name="Pan H."/>
            <person name="Phan S."/>
            <person name="Qi S."/>
            <person name="Qian Y."/>
            <person name="Ray L."/>
            <person name="Ren Q."/>
            <person name="Shaull S."/>
            <person name="Sloan D."/>
            <person name="Song L."/>
            <person name="Wang Q."/>
            <person name="Wang Y."/>
            <person name="Wang Z."/>
            <person name="White J."/>
            <person name="Willingham D."/>
            <person name="Wu H."/>
            <person name="Yao Z."/>
            <person name="Zhan M."/>
            <person name="Zhang G."/>
            <person name="Chissoe S."/>
            <person name="Murray J."/>
            <person name="Miller N."/>
            <person name="Minx P."/>
            <person name="Fulton R."/>
            <person name="Johnson D."/>
            <person name="Bemis G."/>
            <person name="Bentley D."/>
            <person name="Bradshaw H."/>
            <person name="Bourne S."/>
            <person name="Cordes M."/>
            <person name="Du Z."/>
            <person name="Fulton L."/>
            <person name="Goela D."/>
            <person name="Graves T."/>
            <person name="Hawkins J."/>
            <person name="Hinds K."/>
            <person name="Kemp K."/>
            <person name="Latreille P."/>
            <person name="Layman D."/>
            <person name="Ozersky P."/>
            <person name="Rohlfing T."/>
            <person name="Scheet P."/>
            <person name="Walker C."/>
            <person name="Wamsley A."/>
            <person name="Wohldmann P."/>
            <person name="Pepin K."/>
            <person name="Nelson J."/>
            <person name="Korf I."/>
            <person name="Bedell J.A."/>
            <person name="Hillier L.W."/>
            <person name="Mardis E."/>
            <person name="Waterston R."/>
            <person name="Wilson R."/>
            <person name="Emanuel B.S."/>
            <person name="Shaikh T."/>
            <person name="Kurahashi H."/>
            <person name="Saitta S."/>
            <person name="Budarf M.L."/>
            <person name="McDermid H.E."/>
            <person name="Johnson A."/>
            <person name="Wong A.C.C."/>
            <person name="Morrow B.E."/>
            <person name="Edelmann L."/>
            <person name="Kim U.J."/>
            <person name="Shizuya H."/>
            <person name="Simon M.I."/>
            <person name="Dumanski J.P."/>
            <person name="Peyrard M."/>
            <person name="Kedra D."/>
            <person name="Seroussi E."/>
            <person name="Fransson I."/>
            <person name="Tapia I."/>
            <person name="Bruder C.E."/>
            <person name="O'Brien K.P."/>
            <person name="Wilkinson P."/>
            <person name="Bodenteich A."/>
            <person name="Hartman K."/>
            <person name="Hu X."/>
            <person name="Khan A.S."/>
            <person name="Lane L."/>
            <person name="Tilahun Y."/>
            <person name="Wright H."/>
        </authorList>
    </citation>
    <scope>NUCLEOTIDE SEQUENCE [LARGE SCALE GENOMIC DNA]</scope>
</reference>
<sequence>MTAAETGRGKPRLGGGSGLGGSPAAVVWLHVGATGRDAVSPREPVVAAQAAGRPLKLPRRLLRQPTPGLRGAESGPTVDMPVPSSFNDIGQGWRLRHFVSWLWYEREVTLLERWIQDLCTRVVLRIGSAHFYAIVWVNGVDTVEHEGGYLPFEADISSLFQVEPLPSHLCITIAINNTLTPQPCHQGPSVHDRHLQVGTILPPLHAPTFPPHPVVFLPGTGYPKGYFVQNTDFDFFSYAGLLWSLLLYTTPPTYIDDVTVTTGVKRDSGEGFW</sequence>
<evidence type="ECO:0000256" key="1">
    <source>
        <dbReference type="SAM" id="MobiDB-lite"/>
    </source>
</evidence>
<evidence type="ECO:0000305" key="2"/>